<dbReference type="EC" id="2.8.2.-"/>
<dbReference type="EMBL" id="AF188699">
    <property type="protein sequence ID" value="AAF61198.1"/>
    <property type="molecule type" value="mRNA"/>
</dbReference>
<dbReference type="EMBL" id="AF176343">
    <property type="protein sequence ID" value="AAK64596.1"/>
    <property type="molecule type" value="mRNA"/>
</dbReference>
<dbReference type="RefSeq" id="NP_113829.1">
    <property type="nucleotide sequence ID" value="NM_031641.2"/>
</dbReference>
<dbReference type="SMR" id="P63047"/>
<dbReference type="FunCoup" id="P63047">
    <property type="interactions" value="880"/>
</dbReference>
<dbReference type="STRING" id="10116.ENSRNOP00000066760"/>
<dbReference type="iPTMnet" id="P63047"/>
<dbReference type="PhosphoSitePlus" id="P63047"/>
<dbReference type="PaxDb" id="10116-ENSRNOP00000066760"/>
<dbReference type="Ensembl" id="ENSRNOT00000075099.3">
    <property type="protein sequence ID" value="ENSRNOP00000066760.1"/>
    <property type="gene ID" value="ENSRNOG00000046975.3"/>
</dbReference>
<dbReference type="GeneID" id="58953"/>
<dbReference type="KEGG" id="rno:58953"/>
<dbReference type="AGR" id="RGD:69292"/>
<dbReference type="CTD" id="25830"/>
<dbReference type="RGD" id="69292">
    <property type="gene designation" value="Sult4a1"/>
</dbReference>
<dbReference type="eggNOG" id="KOG1584">
    <property type="taxonomic scope" value="Eukaryota"/>
</dbReference>
<dbReference type="GeneTree" id="ENSGT00940000158662"/>
<dbReference type="HOGENOM" id="CLU_027239_1_1_1"/>
<dbReference type="InParanoid" id="P63047"/>
<dbReference type="OMA" id="MVESCHQ"/>
<dbReference type="OrthoDB" id="205623at2759"/>
<dbReference type="PhylomeDB" id="P63047"/>
<dbReference type="Reactome" id="R-RNO-156584">
    <property type="pathway name" value="Cytosolic sulfonation of small molecules"/>
</dbReference>
<dbReference type="PRO" id="PR:P63047"/>
<dbReference type="Proteomes" id="UP000002494">
    <property type="component" value="Chromosome 7"/>
</dbReference>
<dbReference type="Bgee" id="ENSRNOG00000046975">
    <property type="expression patterns" value="Expressed in frontal cortex and 11 other cell types or tissues"/>
</dbReference>
<dbReference type="GO" id="GO:0005737">
    <property type="term" value="C:cytoplasm"/>
    <property type="evidence" value="ECO:0000318"/>
    <property type="project" value="GO_Central"/>
</dbReference>
<dbReference type="GO" id="GO:0005829">
    <property type="term" value="C:cytosol"/>
    <property type="evidence" value="ECO:0000266"/>
    <property type="project" value="RGD"/>
</dbReference>
<dbReference type="GO" id="GO:0005739">
    <property type="term" value="C:mitochondrion"/>
    <property type="evidence" value="ECO:0000266"/>
    <property type="project" value="RGD"/>
</dbReference>
<dbReference type="GO" id="GO:0042802">
    <property type="term" value="F:identical protein binding"/>
    <property type="evidence" value="ECO:0000266"/>
    <property type="project" value="RGD"/>
</dbReference>
<dbReference type="GO" id="GO:0008146">
    <property type="term" value="F:sulfotransferase activity"/>
    <property type="evidence" value="ECO:0000266"/>
    <property type="project" value="RGD"/>
</dbReference>
<dbReference type="GO" id="GO:0140059">
    <property type="term" value="P:dendrite arborization"/>
    <property type="evidence" value="ECO:0000315"/>
    <property type="project" value="UniProtKB"/>
</dbReference>
<dbReference type="GO" id="GO:0008202">
    <property type="term" value="P:steroid metabolic process"/>
    <property type="evidence" value="ECO:0007669"/>
    <property type="project" value="UniProtKB-KW"/>
</dbReference>
<dbReference type="GO" id="GO:0051923">
    <property type="term" value="P:sulfation"/>
    <property type="evidence" value="ECO:0000318"/>
    <property type="project" value="GO_Central"/>
</dbReference>
<dbReference type="GO" id="GO:0006790">
    <property type="term" value="P:sulfur compound metabolic process"/>
    <property type="evidence" value="ECO:0000266"/>
    <property type="project" value="RGD"/>
</dbReference>
<dbReference type="FunFam" id="3.40.50.300:FF:001121">
    <property type="entry name" value="Sulfotransferase"/>
    <property type="match status" value="1"/>
</dbReference>
<dbReference type="Gene3D" id="3.40.50.300">
    <property type="entry name" value="P-loop containing nucleotide triphosphate hydrolases"/>
    <property type="match status" value="1"/>
</dbReference>
<dbReference type="InterPro" id="IPR027417">
    <property type="entry name" value="P-loop_NTPase"/>
</dbReference>
<dbReference type="InterPro" id="IPR000863">
    <property type="entry name" value="Sulfotransferase_dom"/>
</dbReference>
<dbReference type="PANTHER" id="PTHR11783">
    <property type="entry name" value="SULFOTRANSFERASE SULT"/>
    <property type="match status" value="1"/>
</dbReference>
<dbReference type="Pfam" id="PF00685">
    <property type="entry name" value="Sulfotransfer_1"/>
    <property type="match status" value="1"/>
</dbReference>
<dbReference type="SUPFAM" id="SSF52540">
    <property type="entry name" value="P-loop containing nucleoside triphosphate hydrolases"/>
    <property type="match status" value="1"/>
</dbReference>
<sequence length="284" mass="33054">MAESEAETPGTPGEFESKYFEFHGVRLPPFCRGKMEDIADFPVRPSDVWIVTYPKSGTSLLQEVVYLVSQGADPDEIGLMNIDEQLPVLEYPQPGLDIIKELTSPRLIKSHLPYRFLPSDLHNGDSKVIYMARNPKDLVVSYYQFHRSLRTMSYRGTFQEFCRRFMNDKLGYGSWFEHVQEFWEHRMDANVLFLKYEDMHRDLVTMVEQLARFLGVSCDKAQLESLIEHCHQLVDQCCNAEALPVGRGRVGLWKDIFTVSMNEKFDLVYKQKMGKCDLTFDFYL</sequence>
<protein>
    <recommendedName>
        <fullName>Sulfotransferase 4A1</fullName>
        <shortName>ST4A1</shortName>
        <ecNumber>2.8.2.-</ecNumber>
    </recommendedName>
    <alternativeName>
        <fullName>Brain sulfotransferase-like protein</fullName>
        <shortName>rBR-STL</shortName>
    </alternativeName>
    <alternativeName>
        <fullName>Nervous system sulfotransferase</fullName>
        <shortName>NST</shortName>
    </alternativeName>
</protein>
<organism>
    <name type="scientific">Rattus norvegicus</name>
    <name type="common">Rat</name>
    <dbReference type="NCBI Taxonomy" id="10116"/>
    <lineage>
        <taxon>Eukaryota</taxon>
        <taxon>Metazoa</taxon>
        <taxon>Chordata</taxon>
        <taxon>Craniata</taxon>
        <taxon>Vertebrata</taxon>
        <taxon>Euteleostomi</taxon>
        <taxon>Mammalia</taxon>
        <taxon>Eutheria</taxon>
        <taxon>Euarchontoglires</taxon>
        <taxon>Glires</taxon>
        <taxon>Rodentia</taxon>
        <taxon>Myomorpha</taxon>
        <taxon>Muroidea</taxon>
        <taxon>Muridae</taxon>
        <taxon>Murinae</taxon>
        <taxon>Rattus</taxon>
    </lineage>
</organism>
<feature type="chain" id="PRO_0000085169" description="Sulfotransferase 4A1">
    <location>
        <begin position="1"/>
        <end position="284"/>
    </location>
</feature>
<feature type="modified residue" description="Phosphothreonine" evidence="5">
    <location>
        <position position="8"/>
    </location>
</feature>
<feature type="modified residue" description="Phosphothreonine" evidence="5">
    <location>
        <position position="11"/>
    </location>
</feature>
<feature type="modified residue" description="Phosphothreonine" evidence="2">
    <location>
        <position position="205"/>
    </location>
</feature>
<reference key="1">
    <citation type="journal article" date="2000" name="Biochem. J.">
        <title>Molecular cloning and expression of novel sulphotransferase-like cDNAs from human and rat brain.</title>
        <authorList>
            <person name="Falany C.N."/>
            <person name="Xie X."/>
            <person name="Wang J."/>
            <person name="Ferrer J."/>
            <person name="Falany J.L."/>
        </authorList>
    </citation>
    <scope>NUCLEOTIDE SEQUENCE [MRNA]</scope>
    <scope>TISSUE SPECIFICITY</scope>
    <scope>DEVELOPMENTAL STAGE</scope>
    <scope>SUBCELLULAR LOCATION</scope>
    <source>
        <strain>Sprague-Dawley</strain>
        <tissue>Brain</tissue>
    </source>
</reference>
<reference key="2">
    <citation type="submission" date="1999-08" db="EMBL/GenBank/DDBJ databases">
        <title>Molecular identification of a rat nervous system cytoplasmic sulfotransferase, NST.</title>
        <authorList>
            <person name="Martin S.C."/>
            <person name="Farb D.H."/>
        </authorList>
    </citation>
    <scope>NUCLEOTIDE SEQUENCE [MRNA] OF 125-284</scope>
    <source>
        <tissue>Brain</tissue>
    </source>
</reference>
<reference key="3">
    <citation type="journal article" date="2012" name="Nat. Commun.">
        <title>Quantitative maps of protein phosphorylation sites across 14 different rat organs and tissues.</title>
        <authorList>
            <person name="Lundby A."/>
            <person name="Secher A."/>
            <person name="Lage K."/>
            <person name="Nordsborg N.B."/>
            <person name="Dmytriyev A."/>
            <person name="Lundby C."/>
            <person name="Olsen J.V."/>
        </authorList>
    </citation>
    <scope>PHOSPHORYLATION [LARGE SCALE ANALYSIS] AT THR-8 AND THR-11</scope>
    <scope>IDENTIFICATION BY MASS SPECTROMETRY [LARGE SCALE ANALYSIS]</scope>
</reference>
<accession>P63047</accession>
<accession>O88872</accession>
<accession>Q91XS5</accession>
<accession>Q9CWY7</accession>
<accession>Q9DC97</accession>
<name>ST4A1_RAT</name>
<comment type="function">
    <text evidence="1">Atypical sulfotransferase family member with very low affinity for 3'-phospho-5'-adenylyl sulfate (PAPS) and very low catalytic activity towards L-triiodothyronine, thyroxine, estrone, p-nitrophenol, 2-naphthylamine, and 2-beta-naphthol. May have a role in the metabolism of drugs and neurotransmitters in the CNS (By similarity).</text>
</comment>
<comment type="subcellular location">
    <subcellularLocation>
        <location evidence="3">Cytoplasm</location>
    </subcellularLocation>
</comment>
<comment type="tissue specificity">
    <text evidence="3">Expressed in the brain, not detected in the liver, kidney, spleen, heart, small intestine or testis.</text>
</comment>
<comment type="developmental stage">
    <text evidence="3">Expressed at low levels in brains of 1-day old animals but increase to adult levels from 7-day old animals and remain at that level in adults.</text>
</comment>
<comment type="similarity">
    <text evidence="4">Belongs to the sulfotransferase 1 family.</text>
</comment>
<evidence type="ECO:0000250" key="1"/>
<evidence type="ECO:0000250" key="2">
    <source>
        <dbReference type="UniProtKB" id="Q9BR01"/>
    </source>
</evidence>
<evidence type="ECO:0000269" key="3">
    <source>
    </source>
</evidence>
<evidence type="ECO:0000305" key="4"/>
<evidence type="ECO:0007744" key="5">
    <source>
    </source>
</evidence>
<keyword id="KW-0963">Cytoplasm</keyword>
<keyword id="KW-0443">Lipid metabolism</keyword>
<keyword id="KW-0597">Phosphoprotein</keyword>
<keyword id="KW-1185">Reference proteome</keyword>
<keyword id="KW-0753">Steroid metabolism</keyword>
<keyword id="KW-0808">Transferase</keyword>
<gene>
    <name type="primary">Sult4a1</name>
    <name type="synonym">Sultx3</name>
</gene>
<proteinExistence type="evidence at protein level"/>